<protein>
    <recommendedName>
        <fullName evidence="11">Plasma membrane calcium-transporting ATPase 4</fullName>
        <shortName evidence="10">PMCA4</shortName>
        <ecNumber evidence="4">7.2.2.10</ecNumber>
    </recommendedName>
</protein>
<organism>
    <name type="scientific">Bos taurus</name>
    <name type="common">Bovine</name>
    <dbReference type="NCBI Taxonomy" id="9913"/>
    <lineage>
        <taxon>Eukaryota</taxon>
        <taxon>Metazoa</taxon>
        <taxon>Chordata</taxon>
        <taxon>Craniata</taxon>
        <taxon>Vertebrata</taxon>
        <taxon>Euteleostomi</taxon>
        <taxon>Mammalia</taxon>
        <taxon>Eutheria</taxon>
        <taxon>Laurasiatheria</taxon>
        <taxon>Artiodactyla</taxon>
        <taxon>Ruminantia</taxon>
        <taxon>Pecora</taxon>
        <taxon>Bovidae</taxon>
        <taxon>Bovinae</taxon>
        <taxon>Bos</taxon>
    </lineage>
</organism>
<accession>D3K0R6</accession>
<accession>D3K0R5</accession>
<accession>Q28059</accession>
<evidence type="ECO:0000250" key="1"/>
<evidence type="ECO:0000250" key="2">
    <source>
        <dbReference type="UniProtKB" id="P19156"/>
    </source>
</evidence>
<evidence type="ECO:0000250" key="3">
    <source>
        <dbReference type="UniProtKB" id="P20020"/>
    </source>
</evidence>
<evidence type="ECO:0000250" key="4">
    <source>
        <dbReference type="UniProtKB" id="P23634"/>
    </source>
</evidence>
<evidence type="ECO:0000250" key="5">
    <source>
        <dbReference type="UniProtKB" id="Q64542"/>
    </source>
</evidence>
<evidence type="ECO:0000250" key="6">
    <source>
        <dbReference type="UniProtKB" id="Q6Q477"/>
    </source>
</evidence>
<evidence type="ECO:0000255" key="7"/>
<evidence type="ECO:0000256" key="8">
    <source>
        <dbReference type="SAM" id="MobiDB-lite"/>
    </source>
</evidence>
<evidence type="ECO:0000269" key="9">
    <source>
    </source>
</evidence>
<evidence type="ECO:0000303" key="10">
    <source>
    </source>
</evidence>
<evidence type="ECO:0000305" key="11"/>
<name>AT2B4_BOVIN</name>
<reference key="1">
    <citation type="journal article" date="2011" name="J. Biol. Chem.">
        <title>Switch of PMCA4 splice variants in bovine epididymis results in altered isoform expression during functional sperm maturation.</title>
        <authorList>
            <person name="Brandenburger T."/>
            <person name="Strehler E.E."/>
            <person name="Filoteo A.G."/>
            <person name="Caride A.J."/>
            <person name="Aumuller G."/>
            <person name="Post H."/>
            <person name="Schwarz A."/>
            <person name="Wilhelm B."/>
        </authorList>
    </citation>
    <scope>NUCLEOTIDE SEQUENCE [MRNA] (ISOFORM 2)</scope>
    <scope>NUCLEOTIDE SEQUENCE [MRNA] OF 1-1175 (ISOFORM 1)</scope>
    <scope>TISSUE SPECIFICITY</scope>
    <scope>SUBCELLULAR LOCATION</scope>
</reference>
<reference key="2">
    <citation type="journal article" date="2009" name="Genome Biol.">
        <title>A whole-genome assembly of the domestic cow, Bos taurus.</title>
        <authorList>
            <person name="Zimin A.V."/>
            <person name="Delcher A.L."/>
            <person name="Florea L."/>
            <person name="Kelley D.R."/>
            <person name="Schatz M.C."/>
            <person name="Puiu D."/>
            <person name="Hanrahan F."/>
            <person name="Pertea G."/>
            <person name="Van Tassell C.P."/>
            <person name="Sonstegard T.S."/>
            <person name="Marcais G."/>
            <person name="Roberts M."/>
            <person name="Subramanian P."/>
            <person name="Yorke J.A."/>
            <person name="Salzberg S.L."/>
        </authorList>
    </citation>
    <scope>NUCLEOTIDE SEQUENCE [LARGE SCALE GENOMIC DNA]</scope>
    <source>
        <strain>Hereford</strain>
    </source>
</reference>
<reference key="3">
    <citation type="journal article" date="1988" name="Proc. Natl. Acad. Sci. U.S.A.">
        <title>A C-terminal, calmodulin-like regulatory domain from the plasma membrane Ca2+-pumping ATPase.</title>
        <authorList>
            <person name="Brandt P."/>
            <person name="Zurini M."/>
            <person name="Neve R.L."/>
            <person name="Rhoads R.E."/>
            <person name="Vanaman T.C."/>
        </authorList>
    </citation>
    <scope>NUCLEOTIDE SEQUENCE [MRNA] OF 1137-1207 (ISOFORM 1)</scope>
</reference>
<keyword id="KW-0025">Alternative splicing</keyword>
<keyword id="KW-0067">ATP-binding</keyword>
<keyword id="KW-0106">Calcium</keyword>
<keyword id="KW-0109">Calcium transport</keyword>
<keyword id="KW-0112">Calmodulin-binding</keyword>
<keyword id="KW-1003">Cell membrane</keyword>
<keyword id="KW-0966">Cell projection</keyword>
<keyword id="KW-0969">Cilium</keyword>
<keyword id="KW-0282">Flagellum</keyword>
<keyword id="KW-0406">Ion transport</keyword>
<keyword id="KW-0460">Magnesium</keyword>
<keyword id="KW-0472">Membrane</keyword>
<keyword id="KW-0479">Metal-binding</keyword>
<keyword id="KW-0547">Nucleotide-binding</keyword>
<keyword id="KW-0597">Phosphoprotein</keyword>
<keyword id="KW-1185">Reference proteome</keyword>
<keyword id="KW-1278">Translocase</keyword>
<keyword id="KW-0812">Transmembrane</keyword>
<keyword id="KW-1133">Transmembrane helix</keyword>
<keyword id="KW-0813">Transport</keyword>
<sequence length="1207" mass="133792">MTNPTEHTLPSNSILESREGEFGCTVMDLRKLMELRSSDAIDQINVHYGGVMNLCSRLKTNPVEGLSGNPADLEKRKQVFGQNLIPPKKPKTFLELVWEALQDVTLIILEIAAIISLVLSFYRPPGGENEQCGLAVTSPEDEGEAEAGWIEGAAILFSVIIVVLVTAFNDWSKEKQFRGLQNRIEKEQKFSVIRNGHIIQLPVAEIVVGDIAQIKYGDLLPADGILIQGNDLKIDESSLTGESDHVKKSLERDPMLLSGTHVMEGSGRMVVTAVGINSQTGIIFTLLGASEGEEEEKKKKGKKQGVPENRNKAKTQDGVALEIQPLNSQEGIDSEEKEKKAAKLPKKEKSVLQGKLTRLAVQIGKAGLIMSAITVLILILYFVIDNFVIQRRPWLAECTPIYVQYFVKFFIIGVTVLVVAVPEGLPLAVTISLAYSVKKMMKDNNLVRHLDACETMGNATAICSDKTGTLTMNRMSVVQAYIGDTRYHQIPSPDDLVPKVLDLIVNGISINSAYTSKILPPEKEGGLPRQVGNKTECALLGFVSDLKQDYHAVRSEVPEEKLYKVYTFNSVRKSMSTVIEKPGGGYRMYSKGASEIILRKCNRILDKKGEAVPFKNKDRDEMVRTVIEPMACEGLRTLCIAYRDFNDGEPPWDNESEILTELTCIAVVGIEDPVRPEVPEAIAKCKRAGITVRMVTGDNINTARAIATKCGIVTPGDDFLCLEGKEFNRLIRNEKGEVEQEKLDKIWPKLRVLARSSPTDKHTLVKGIIDSTVGDQRQVVAVTGDGTNDGPALKKADVGFAMGIAGTDVAKEASDIILTDDNFTSIVKAVMWGRNVYDSISKFLQFQLTVNVVAVIVAFTGACITQDSPLKAVQMLWVNLIMDTFASLALATEPPTDSLLKRRPYGRNKPLISRTMMKNILGHAVYQLTVIFFLVFAGEKFFDIDSGRRAPLHSPPSQHYTIIFNTFVLMQLFNEINSRKIHGERNVFSGIFRNLIFCSVVLGTFISQIIIVEFGGKPFSCTKLTLSQWFWCLFIGIGELLWGQVISTIPTQSLKFLKEAGHGTTKEEITKDAEGLDEIDHAEMELRRGQILWFRGLNRIQTQIKVVKAFHSSLHESIQKPKNQNSIHNFMTHPEFTIDEEGPRTPLLDEQEEEIFEKVSKPGTKTSSLDGEVTPQTNKNNNTVDCCQVQIVASHSDSPLHSLETSV</sequence>
<dbReference type="EC" id="7.2.2.10" evidence="4"/>
<dbReference type="EMBL" id="GU353069">
    <property type="protein sequence ID" value="ADB79572.1"/>
    <property type="molecule type" value="mRNA"/>
</dbReference>
<dbReference type="EMBL" id="GU353070">
    <property type="protein sequence ID" value="ADB79573.1"/>
    <property type="molecule type" value="mRNA"/>
</dbReference>
<dbReference type="EMBL" id="DAAA02041902">
    <property type="status" value="NOT_ANNOTATED_CDS"/>
    <property type="molecule type" value="Genomic_DNA"/>
</dbReference>
<dbReference type="EMBL" id="DAAA02041903">
    <property type="status" value="NOT_ANNOTATED_CDS"/>
    <property type="molecule type" value="Genomic_DNA"/>
</dbReference>
<dbReference type="EMBL" id="DAAA02041904">
    <property type="status" value="NOT_ANNOTATED_CDS"/>
    <property type="molecule type" value="Genomic_DNA"/>
</dbReference>
<dbReference type="EMBL" id="DAAA02041905">
    <property type="status" value="NOT_ANNOTATED_CDS"/>
    <property type="molecule type" value="Genomic_DNA"/>
</dbReference>
<dbReference type="EMBL" id="DAAA02041906">
    <property type="status" value="NOT_ANNOTATED_CDS"/>
    <property type="molecule type" value="Genomic_DNA"/>
</dbReference>
<dbReference type="EMBL" id="J03649">
    <property type="protein sequence ID" value="AAA30393.1"/>
    <property type="molecule type" value="mRNA"/>
</dbReference>
<dbReference type="PIR" id="A31332">
    <property type="entry name" value="A31332"/>
</dbReference>
<dbReference type="RefSeq" id="NP_001166065.1">
    <property type="nucleotide sequence ID" value="NM_001172594.1"/>
</dbReference>
<dbReference type="RefSeq" id="XP_024831809.1">
    <molecule id="D3K0R6-1"/>
    <property type="nucleotide sequence ID" value="XM_024976041.2"/>
</dbReference>
<dbReference type="RefSeq" id="XP_024831810.1">
    <molecule id="D3K0R6-1"/>
    <property type="nucleotide sequence ID" value="XM_024976042.2"/>
</dbReference>
<dbReference type="SMR" id="D3K0R6"/>
<dbReference type="FunCoup" id="D3K0R6">
    <property type="interactions" value="1395"/>
</dbReference>
<dbReference type="STRING" id="9913.ENSBTAP00000057551"/>
<dbReference type="PaxDb" id="9913-ENSBTAP00000018688"/>
<dbReference type="GeneID" id="282146"/>
<dbReference type="KEGG" id="bta:282146"/>
<dbReference type="CTD" id="493"/>
<dbReference type="VEuPathDB" id="HostDB:ENSBTAG00000014059"/>
<dbReference type="eggNOG" id="KOG0204">
    <property type="taxonomic scope" value="Eukaryota"/>
</dbReference>
<dbReference type="InParanoid" id="D3K0R6"/>
<dbReference type="OrthoDB" id="116380at2759"/>
<dbReference type="Reactome" id="R-BTA-418359">
    <property type="pathway name" value="Reduction of cytosolic Ca++ levels"/>
</dbReference>
<dbReference type="Reactome" id="R-BTA-5578775">
    <property type="pathway name" value="Ion homeostasis"/>
</dbReference>
<dbReference type="Reactome" id="R-BTA-936837">
    <property type="pathway name" value="Ion transport by P-type ATPases"/>
</dbReference>
<dbReference type="Proteomes" id="UP000009136">
    <property type="component" value="Chromosome 16"/>
</dbReference>
<dbReference type="Bgee" id="ENSBTAG00000014059">
    <property type="expression patterns" value="Expressed in cardiac ventricle and 110 other cell types or tissues"/>
</dbReference>
<dbReference type="GO" id="GO:0036064">
    <property type="term" value="C:ciliary basal body"/>
    <property type="evidence" value="ECO:0007669"/>
    <property type="project" value="Ensembl"/>
</dbReference>
<dbReference type="GO" id="GO:0043231">
    <property type="term" value="C:intracellular membrane-bounded organelle"/>
    <property type="evidence" value="ECO:0000318"/>
    <property type="project" value="GO_Central"/>
</dbReference>
<dbReference type="GO" id="GO:0045121">
    <property type="term" value="C:membrane raft"/>
    <property type="evidence" value="ECO:0007669"/>
    <property type="project" value="Ensembl"/>
</dbReference>
<dbReference type="GO" id="GO:0005739">
    <property type="term" value="C:mitochondrion"/>
    <property type="evidence" value="ECO:0007669"/>
    <property type="project" value="Ensembl"/>
</dbReference>
<dbReference type="GO" id="GO:0005886">
    <property type="term" value="C:plasma membrane"/>
    <property type="evidence" value="ECO:0000318"/>
    <property type="project" value="GO_Central"/>
</dbReference>
<dbReference type="GO" id="GO:0036126">
    <property type="term" value="C:sperm flagellum"/>
    <property type="evidence" value="ECO:0000250"/>
    <property type="project" value="UniProtKB"/>
</dbReference>
<dbReference type="GO" id="GO:0030315">
    <property type="term" value="C:T-tubule"/>
    <property type="evidence" value="ECO:0007669"/>
    <property type="project" value="Ensembl"/>
</dbReference>
<dbReference type="GO" id="GO:0030018">
    <property type="term" value="C:Z disc"/>
    <property type="evidence" value="ECO:0007669"/>
    <property type="project" value="Ensembl"/>
</dbReference>
<dbReference type="GO" id="GO:0005524">
    <property type="term" value="F:ATP binding"/>
    <property type="evidence" value="ECO:0007669"/>
    <property type="project" value="UniProtKB-KW"/>
</dbReference>
<dbReference type="GO" id="GO:0016887">
    <property type="term" value="F:ATP hydrolysis activity"/>
    <property type="evidence" value="ECO:0007669"/>
    <property type="project" value="InterPro"/>
</dbReference>
<dbReference type="GO" id="GO:0005516">
    <property type="term" value="F:calmodulin binding"/>
    <property type="evidence" value="ECO:0007669"/>
    <property type="project" value="UniProtKB-KW"/>
</dbReference>
<dbReference type="GO" id="GO:0046872">
    <property type="term" value="F:metal ion binding"/>
    <property type="evidence" value="ECO:0007669"/>
    <property type="project" value="UniProtKB-KW"/>
</dbReference>
<dbReference type="GO" id="GO:0050998">
    <property type="term" value="F:nitric-oxide synthase binding"/>
    <property type="evidence" value="ECO:0007669"/>
    <property type="project" value="Ensembl"/>
</dbReference>
<dbReference type="GO" id="GO:0036487">
    <property type="term" value="F:nitric-oxide synthase inhibitor activity"/>
    <property type="evidence" value="ECO:0007669"/>
    <property type="project" value="Ensembl"/>
</dbReference>
<dbReference type="GO" id="GO:0005388">
    <property type="term" value="F:P-type calcium transporter activity"/>
    <property type="evidence" value="ECO:0000318"/>
    <property type="project" value="GO_Central"/>
</dbReference>
<dbReference type="GO" id="GO:0030346">
    <property type="term" value="F:protein phosphatase 2B binding"/>
    <property type="evidence" value="ECO:0007669"/>
    <property type="project" value="Ensembl"/>
</dbReference>
<dbReference type="GO" id="GO:1901660">
    <property type="term" value="P:calcium ion export"/>
    <property type="evidence" value="ECO:0007669"/>
    <property type="project" value="Ensembl"/>
</dbReference>
<dbReference type="GO" id="GO:1905145">
    <property type="term" value="P:cellular response to acetylcholine"/>
    <property type="evidence" value="ECO:0000250"/>
    <property type="project" value="UniProtKB"/>
</dbReference>
<dbReference type="GO" id="GO:0071872">
    <property type="term" value="P:cellular response to epinephrine stimulus"/>
    <property type="evidence" value="ECO:0007669"/>
    <property type="project" value="Ensembl"/>
</dbReference>
<dbReference type="GO" id="GO:0030317">
    <property type="term" value="P:flagellated sperm motility"/>
    <property type="evidence" value="ECO:0000250"/>
    <property type="project" value="UniProtKB"/>
</dbReference>
<dbReference type="GO" id="GO:0006874">
    <property type="term" value="P:intracellular calcium ion homeostasis"/>
    <property type="evidence" value="ECO:0000250"/>
    <property type="project" value="UniProtKB"/>
</dbReference>
<dbReference type="GO" id="GO:0071878">
    <property type="term" value="P:negative regulation of adenylate cyclase-activating adrenergic receptor signaling pathway"/>
    <property type="evidence" value="ECO:0007669"/>
    <property type="project" value="Ensembl"/>
</dbReference>
<dbReference type="GO" id="GO:0016525">
    <property type="term" value="P:negative regulation of angiogenesis"/>
    <property type="evidence" value="ECO:0007669"/>
    <property type="project" value="Ensembl"/>
</dbReference>
<dbReference type="GO" id="GO:1900082">
    <property type="term" value="P:negative regulation of arginine catabolic process"/>
    <property type="evidence" value="ECO:0007669"/>
    <property type="project" value="Ensembl"/>
</dbReference>
<dbReference type="GO" id="GO:0043537">
    <property type="term" value="P:negative regulation of blood vessel endothelial cell migration"/>
    <property type="evidence" value="ECO:0007669"/>
    <property type="project" value="Ensembl"/>
</dbReference>
<dbReference type="GO" id="GO:0070885">
    <property type="term" value="P:negative regulation of calcineurin-NFAT signaling cascade"/>
    <property type="evidence" value="ECO:0007669"/>
    <property type="project" value="Ensembl"/>
</dbReference>
<dbReference type="GO" id="GO:1903243">
    <property type="term" value="P:negative regulation of cardiac muscle hypertrophy in response to stress"/>
    <property type="evidence" value="ECO:0007669"/>
    <property type="project" value="Ensembl"/>
</dbReference>
<dbReference type="GO" id="GO:1902548">
    <property type="term" value="P:negative regulation of cellular response to vascular endothelial growth factor stimulus"/>
    <property type="evidence" value="ECO:0007669"/>
    <property type="project" value="Ensembl"/>
</dbReference>
<dbReference type="GO" id="GO:1903249">
    <property type="term" value="P:negative regulation of citrulline biosynthetic process"/>
    <property type="evidence" value="ECO:0007669"/>
    <property type="project" value="Ensembl"/>
</dbReference>
<dbReference type="GO" id="GO:0010629">
    <property type="term" value="P:negative regulation of gene expression"/>
    <property type="evidence" value="ECO:0007669"/>
    <property type="project" value="Ensembl"/>
</dbReference>
<dbReference type="GO" id="GO:0045019">
    <property type="term" value="P:negative regulation of nitric oxide biosynthetic process"/>
    <property type="evidence" value="ECO:0007669"/>
    <property type="project" value="Ensembl"/>
</dbReference>
<dbReference type="GO" id="GO:0098736">
    <property type="term" value="P:negative regulation of the force of heart contraction"/>
    <property type="evidence" value="ECO:0007669"/>
    <property type="project" value="Ensembl"/>
</dbReference>
<dbReference type="GO" id="GO:0038060">
    <property type="term" value="P:nitric oxide-cGMP-mediated signaling"/>
    <property type="evidence" value="ECO:0007669"/>
    <property type="project" value="Ensembl"/>
</dbReference>
<dbReference type="GO" id="GO:1903078">
    <property type="term" value="P:positive regulation of protein localization to plasma membrane"/>
    <property type="evidence" value="ECO:0007669"/>
    <property type="project" value="Ensembl"/>
</dbReference>
<dbReference type="GO" id="GO:1902806">
    <property type="term" value="P:regulation of cell cycle G1/S phase transition"/>
    <property type="evidence" value="ECO:0007669"/>
    <property type="project" value="Ensembl"/>
</dbReference>
<dbReference type="GO" id="GO:0051480">
    <property type="term" value="P:regulation of cytosolic calcium ion concentration"/>
    <property type="evidence" value="ECO:0000318"/>
    <property type="project" value="GO_Central"/>
</dbReference>
<dbReference type="GO" id="GO:0006357">
    <property type="term" value="P:regulation of transcription by RNA polymerase II"/>
    <property type="evidence" value="ECO:0007669"/>
    <property type="project" value="Ensembl"/>
</dbReference>
<dbReference type="GO" id="GO:0051599">
    <property type="term" value="P:response to hydrostatic pressure"/>
    <property type="evidence" value="ECO:0007669"/>
    <property type="project" value="Ensembl"/>
</dbReference>
<dbReference type="GO" id="GO:0014832">
    <property type="term" value="P:urinary bladder smooth muscle contraction"/>
    <property type="evidence" value="ECO:0000250"/>
    <property type="project" value="UniProtKB"/>
</dbReference>
<dbReference type="CDD" id="cd02081">
    <property type="entry name" value="P-type_ATPase_Ca_PMCA-like"/>
    <property type="match status" value="1"/>
</dbReference>
<dbReference type="FunFam" id="1.20.1110.10:FF:000001">
    <property type="entry name" value="Calcium-transporting ATPase"/>
    <property type="match status" value="1"/>
</dbReference>
<dbReference type="FunFam" id="1.20.1110.10:FF:000002">
    <property type="entry name" value="Calcium-transporting ATPase"/>
    <property type="match status" value="1"/>
</dbReference>
<dbReference type="FunFam" id="1.20.1110.10:FF:000011">
    <property type="entry name" value="Calcium-transporting ATPase"/>
    <property type="match status" value="1"/>
</dbReference>
<dbReference type="FunFam" id="2.70.150.10:FF:000001">
    <property type="entry name" value="Calcium-transporting ATPase"/>
    <property type="match status" value="1"/>
</dbReference>
<dbReference type="FunFam" id="3.40.1110.10:FF:000022">
    <property type="entry name" value="Calcium-transporting ATPase"/>
    <property type="match status" value="1"/>
</dbReference>
<dbReference type="FunFam" id="3.40.50.1000:FF:000007">
    <property type="entry name" value="Calcium-transporting ATPase"/>
    <property type="match status" value="1"/>
</dbReference>
<dbReference type="Gene3D" id="3.40.1110.10">
    <property type="entry name" value="Calcium-transporting ATPase, cytoplasmic domain N"/>
    <property type="match status" value="1"/>
</dbReference>
<dbReference type="Gene3D" id="2.70.150.10">
    <property type="entry name" value="Calcium-transporting ATPase, cytoplasmic transduction domain A"/>
    <property type="match status" value="1"/>
</dbReference>
<dbReference type="Gene3D" id="1.20.1110.10">
    <property type="entry name" value="Calcium-transporting ATPase, transmembrane domain"/>
    <property type="match status" value="3"/>
</dbReference>
<dbReference type="Gene3D" id="3.40.50.1000">
    <property type="entry name" value="HAD superfamily/HAD-like"/>
    <property type="match status" value="1"/>
</dbReference>
<dbReference type="InterPro" id="IPR022141">
    <property type="entry name" value="ATP_Ca_trans_C"/>
</dbReference>
<dbReference type="InterPro" id="IPR006068">
    <property type="entry name" value="ATPase_P-typ_cation-transptr_C"/>
</dbReference>
<dbReference type="InterPro" id="IPR004014">
    <property type="entry name" value="ATPase_P-typ_cation-transptr_N"/>
</dbReference>
<dbReference type="InterPro" id="IPR023299">
    <property type="entry name" value="ATPase_P-typ_cyto_dom_N"/>
</dbReference>
<dbReference type="InterPro" id="IPR018303">
    <property type="entry name" value="ATPase_P-typ_P_site"/>
</dbReference>
<dbReference type="InterPro" id="IPR023298">
    <property type="entry name" value="ATPase_P-typ_TM_dom_sf"/>
</dbReference>
<dbReference type="InterPro" id="IPR008250">
    <property type="entry name" value="ATPase_P-typ_transduc_dom_A_sf"/>
</dbReference>
<dbReference type="InterPro" id="IPR036412">
    <property type="entry name" value="HAD-like_sf"/>
</dbReference>
<dbReference type="InterPro" id="IPR023214">
    <property type="entry name" value="HAD_sf"/>
</dbReference>
<dbReference type="InterPro" id="IPR006408">
    <property type="entry name" value="P-type_ATPase_IIB"/>
</dbReference>
<dbReference type="InterPro" id="IPR001757">
    <property type="entry name" value="P_typ_ATPase"/>
</dbReference>
<dbReference type="InterPro" id="IPR044492">
    <property type="entry name" value="P_typ_ATPase_HD_dom"/>
</dbReference>
<dbReference type="NCBIfam" id="TIGR01517">
    <property type="entry name" value="ATPase-IIB_Ca"/>
    <property type="match status" value="1"/>
</dbReference>
<dbReference type="NCBIfam" id="TIGR01494">
    <property type="entry name" value="ATPase_P-type"/>
    <property type="match status" value="3"/>
</dbReference>
<dbReference type="PANTHER" id="PTHR24093">
    <property type="entry name" value="CATION TRANSPORTING ATPASE"/>
    <property type="match status" value="1"/>
</dbReference>
<dbReference type="PANTHER" id="PTHR24093:SF435">
    <property type="entry name" value="PLASMA MEMBRANE CALCIUM-TRANSPORTING ATPASE 4"/>
    <property type="match status" value="1"/>
</dbReference>
<dbReference type="Pfam" id="PF12424">
    <property type="entry name" value="ATP_Ca_trans_C"/>
    <property type="match status" value="1"/>
</dbReference>
<dbReference type="Pfam" id="PF13246">
    <property type="entry name" value="Cation_ATPase"/>
    <property type="match status" value="1"/>
</dbReference>
<dbReference type="Pfam" id="PF00689">
    <property type="entry name" value="Cation_ATPase_C"/>
    <property type="match status" value="1"/>
</dbReference>
<dbReference type="Pfam" id="PF00690">
    <property type="entry name" value="Cation_ATPase_N"/>
    <property type="match status" value="1"/>
</dbReference>
<dbReference type="Pfam" id="PF00122">
    <property type="entry name" value="E1-E2_ATPase"/>
    <property type="match status" value="2"/>
</dbReference>
<dbReference type="Pfam" id="PF00702">
    <property type="entry name" value="Hydrolase"/>
    <property type="match status" value="1"/>
</dbReference>
<dbReference type="PRINTS" id="PR00119">
    <property type="entry name" value="CATATPASE"/>
</dbReference>
<dbReference type="SFLD" id="SFLDS00003">
    <property type="entry name" value="Haloacid_Dehalogenase"/>
    <property type="match status" value="1"/>
</dbReference>
<dbReference type="SFLD" id="SFLDF00027">
    <property type="entry name" value="p-type_atpase"/>
    <property type="match status" value="1"/>
</dbReference>
<dbReference type="SMART" id="SM00831">
    <property type="entry name" value="Cation_ATPase_N"/>
    <property type="match status" value="1"/>
</dbReference>
<dbReference type="SUPFAM" id="SSF81653">
    <property type="entry name" value="Calcium ATPase, transduction domain A"/>
    <property type="match status" value="1"/>
</dbReference>
<dbReference type="SUPFAM" id="SSF81665">
    <property type="entry name" value="Calcium ATPase, transmembrane domain M"/>
    <property type="match status" value="1"/>
</dbReference>
<dbReference type="SUPFAM" id="SSF56784">
    <property type="entry name" value="HAD-like"/>
    <property type="match status" value="1"/>
</dbReference>
<dbReference type="SUPFAM" id="SSF81660">
    <property type="entry name" value="Metal cation-transporting ATPase, ATP-binding domain N"/>
    <property type="match status" value="1"/>
</dbReference>
<dbReference type="PROSITE" id="PS00154">
    <property type="entry name" value="ATPASE_E1_E2"/>
    <property type="match status" value="1"/>
</dbReference>
<proteinExistence type="evidence at protein level"/>
<feature type="chain" id="PRO_0000435123" description="Plasma membrane calcium-transporting ATPase 4">
    <location>
        <begin position="1"/>
        <end position="1207"/>
    </location>
</feature>
<feature type="topological domain" description="Cytoplasmic" evidence="11">
    <location>
        <begin position="1"/>
        <end position="100"/>
    </location>
</feature>
<feature type="transmembrane region" description="Helical" evidence="7">
    <location>
        <begin position="101"/>
        <end position="121"/>
    </location>
</feature>
<feature type="topological domain" description="Extracellular" evidence="11">
    <location>
        <begin position="122"/>
        <end position="147"/>
    </location>
</feature>
<feature type="transmembrane region" description="Helical" evidence="7">
    <location>
        <begin position="148"/>
        <end position="168"/>
    </location>
</feature>
<feature type="topological domain" description="Cytoplasmic" evidence="11">
    <location>
        <begin position="169"/>
        <end position="368"/>
    </location>
</feature>
<feature type="transmembrane region" description="Helical" evidence="7">
    <location>
        <begin position="369"/>
        <end position="389"/>
    </location>
</feature>
<feature type="topological domain" description="Extracellular" evidence="11">
    <location>
        <begin position="390"/>
        <end position="408"/>
    </location>
</feature>
<feature type="transmembrane region" description="Helical" evidence="7">
    <location>
        <begin position="409"/>
        <end position="429"/>
    </location>
</feature>
<feature type="topological domain" description="Cytoplasmic" evidence="11">
    <location>
        <begin position="430"/>
        <end position="843"/>
    </location>
</feature>
<feature type="transmembrane region" description="Helical" evidence="7">
    <location>
        <begin position="844"/>
        <end position="864"/>
    </location>
</feature>
<feature type="topological domain" description="Extracellular" evidence="11">
    <location>
        <begin position="865"/>
        <end position="871"/>
    </location>
</feature>
<feature type="transmembrane region" description="Helical" evidence="7">
    <location>
        <begin position="872"/>
        <end position="892"/>
    </location>
</feature>
<feature type="topological domain" description="Cytoplasmic" evidence="11">
    <location>
        <begin position="893"/>
        <end position="918"/>
    </location>
</feature>
<feature type="transmembrane region" description="Helical" evidence="7">
    <location>
        <begin position="919"/>
        <end position="939"/>
    </location>
</feature>
<feature type="topological domain" description="Extracellular" evidence="11">
    <location>
        <begin position="940"/>
        <end position="957"/>
    </location>
</feature>
<feature type="transmembrane region" description="Helical" evidence="7">
    <location>
        <begin position="958"/>
        <end position="977"/>
    </location>
</feature>
<feature type="topological domain" description="Cytoplasmic" evidence="11">
    <location>
        <begin position="978"/>
        <end position="994"/>
    </location>
</feature>
<feature type="transmembrane region" description="Helical" evidence="7">
    <location>
        <begin position="995"/>
        <end position="1015"/>
    </location>
</feature>
<feature type="topological domain" description="Extracellular" evidence="11">
    <location>
        <begin position="1016"/>
        <end position="1028"/>
    </location>
</feature>
<feature type="transmembrane region" description="Helical" evidence="7">
    <location>
        <begin position="1029"/>
        <end position="1049"/>
    </location>
</feature>
<feature type="topological domain" description="Cytoplasmic" evidence="11">
    <location>
        <begin position="1050"/>
        <end position="1207"/>
    </location>
</feature>
<feature type="region of interest" description="Disordered" evidence="8">
    <location>
        <begin position="294"/>
        <end position="317"/>
    </location>
</feature>
<feature type="region of interest" description="Calmodulin-binding subdomain A" evidence="3 4">
    <location>
        <begin position="1086"/>
        <end position="1103"/>
    </location>
</feature>
<feature type="region of interest" description="Calmodulin-binding subdomain B" evidence="3">
    <location>
        <begin position="1104"/>
        <end position="1113"/>
    </location>
</feature>
<feature type="region of interest" description="Disordered" evidence="8">
    <location>
        <begin position="1159"/>
        <end position="1181"/>
    </location>
</feature>
<feature type="compositionally biased region" description="Polar residues" evidence="8">
    <location>
        <begin position="1163"/>
        <end position="1181"/>
    </location>
</feature>
<feature type="active site" description="4-aspartylphosphate intermediate" evidence="2">
    <location>
        <position position="465"/>
    </location>
</feature>
<feature type="binding site" evidence="1">
    <location>
        <position position="785"/>
    </location>
    <ligand>
        <name>Mg(2+)</name>
        <dbReference type="ChEBI" id="CHEBI:18420"/>
    </ligand>
</feature>
<feature type="binding site" evidence="1">
    <location>
        <position position="789"/>
    </location>
    <ligand>
        <name>Mg(2+)</name>
        <dbReference type="ChEBI" id="CHEBI:18420"/>
    </ligand>
</feature>
<feature type="modified residue" description="Phosphoserine" evidence="4">
    <location>
        <position position="13"/>
    </location>
</feature>
<feature type="modified residue" description="Phosphoserine" evidence="4">
    <location>
        <position position="328"/>
    </location>
</feature>
<feature type="modified residue" description="Phosphoserine" evidence="5">
    <location>
        <position position="334"/>
    </location>
</feature>
<feature type="modified residue" description="Phosphothreonine; by PKC" evidence="1">
    <location>
        <position position="1102"/>
    </location>
</feature>
<feature type="splice variant" id="VSP_058016" description="In isoform 2.">
    <location>
        <begin position="300"/>
        <end position="311"/>
    </location>
</feature>
<feature type="splice variant" id="VSP_058017" description="In isoform 2.">
    <original>KVVKAFHSSLHESIQKPKNQNSIHNFMTHPEFTIDEEGPRTPLLDEQEEEIFEKVSKPGTKTSSLDGEVTPQTNKNNNTVDCCQVQIVASHSDSPLHSLETSV</original>
    <variation>DVINTFQTGASFKGVLKRQTMGQHLDVKHVPSSSYVTVAPVKSPPTTSVAAAVSSPTLGNQSGQSV</variation>
    <location>
        <begin position="1105"/>
        <end position="1207"/>
    </location>
</feature>
<feature type="sequence conflict" description="In Ref. 1; ADB79572." ref="1">
    <original>L</original>
    <variation>P</variation>
    <location>
        <position position="180"/>
    </location>
</feature>
<feature type="sequence conflict" description="In Ref. 1; ADB79573." ref="1">
    <original>L</original>
    <variation>F</variation>
    <location>
        <position position="972"/>
    </location>
</feature>
<comment type="function">
    <text evidence="4 6">Calcium/calmodulin-regulated and magnesium-dependent enzyme that catalyzes the hydrolysis of ATP coupled with the transport of calcium out of the cell (By similarity). By regulating sperm cells calcium homeostasis, may play a role in sperm motility (By similarity).</text>
</comment>
<comment type="catalytic activity">
    <reaction evidence="4">
        <text>Ca(2+)(in) + ATP + H2O = Ca(2+)(out) + ADP + phosphate + H(+)</text>
        <dbReference type="Rhea" id="RHEA:18105"/>
        <dbReference type="ChEBI" id="CHEBI:15377"/>
        <dbReference type="ChEBI" id="CHEBI:15378"/>
        <dbReference type="ChEBI" id="CHEBI:29108"/>
        <dbReference type="ChEBI" id="CHEBI:30616"/>
        <dbReference type="ChEBI" id="CHEBI:43474"/>
        <dbReference type="ChEBI" id="CHEBI:456216"/>
        <dbReference type="EC" id="7.2.2.10"/>
    </reaction>
</comment>
<comment type="activity regulation">
    <text evidence="4">Activated by calcium/calmodulin.</text>
</comment>
<comment type="subunit">
    <text evidence="4">Interacts with PDZD11. Interacts with SLC35G1 and STIM1. Interacts with calmodulin.</text>
</comment>
<comment type="subcellular location">
    <subcellularLocation>
        <location evidence="9">Cell membrane</location>
        <topology evidence="7">Multi-pass membrane protein</topology>
    </subcellularLocation>
    <subcellularLocation>
        <location evidence="6">Cell projection</location>
        <location evidence="6">Cilium</location>
        <location evidence="6">Flagellum membrane</location>
        <topology evidence="7">Multi-pass membrane protein</topology>
    </subcellularLocation>
</comment>
<comment type="alternative products">
    <event type="alternative splicing"/>
    <isoform>
        <id>D3K0R6-1</id>
        <name>1</name>
        <name>PMCA4b</name>
        <sequence type="displayed"/>
    </isoform>
    <isoform>
        <id>D3K0R6-2</id>
        <name>2</name>
        <name>PMCA4a</name>
        <sequence type="described" ref="VSP_058016 VSP_058017"/>
    </isoform>
</comment>
<comment type="tissue specificity">
    <text evidence="9">Isoform 1 is detected in brain, heart, liver, testis and epididymis. Isoform 2 is detected in brain (at protein level), heart, seminal vesicle and epididymis. There is a shift in expression from isoform 1 to isoform 2 along the length of the epididymis from caput to cauda (at protein level).</text>
</comment>
<comment type="similarity">
    <text evidence="11">Belongs to the cation transport ATPase (P-type) (TC 3.A.3) family. Type IIB subfamily.</text>
</comment>
<gene>
    <name evidence="4" type="primary">ATP2B4</name>
</gene>